<reference key="1">
    <citation type="journal article" date="1996" name="Proc. Natl. Acad. Sci. U.S.A.">
        <title>Twenty-five coregulated transcripts define a sterigmatocystin gene cluster in Aspergillus nidulans.</title>
        <authorList>
            <person name="Brown D.W."/>
            <person name="Yu J.-H."/>
            <person name="Kelkar H.S."/>
            <person name="Fernandes M."/>
            <person name="Nesbitt T.C."/>
            <person name="Keller N.P."/>
            <person name="Adams T.H."/>
            <person name="Leonard T.J."/>
        </authorList>
    </citation>
    <scope>NUCLEOTIDE SEQUENCE [GENOMIC DNA]</scope>
    <scope>INDUCTION</scope>
    <scope>FUNCTION</scope>
    <scope>PATHWAY</scope>
    <source>
        <strain>FGSC 26</strain>
    </source>
</reference>
<reference key="2">
    <citation type="journal article" date="2005" name="Nature">
        <title>Sequencing of Aspergillus nidulans and comparative analysis with A. fumigatus and A. oryzae.</title>
        <authorList>
            <person name="Galagan J.E."/>
            <person name="Calvo S.E."/>
            <person name="Cuomo C."/>
            <person name="Ma L.-J."/>
            <person name="Wortman J.R."/>
            <person name="Batzoglou S."/>
            <person name="Lee S.-I."/>
            <person name="Bastuerkmen M."/>
            <person name="Spevak C.C."/>
            <person name="Clutterbuck J."/>
            <person name="Kapitonov V."/>
            <person name="Jurka J."/>
            <person name="Scazzocchio C."/>
            <person name="Farman M.L."/>
            <person name="Butler J."/>
            <person name="Purcell S."/>
            <person name="Harris S."/>
            <person name="Braus G.H."/>
            <person name="Draht O."/>
            <person name="Busch S."/>
            <person name="D'Enfert C."/>
            <person name="Bouchier C."/>
            <person name="Goldman G.H."/>
            <person name="Bell-Pedersen D."/>
            <person name="Griffiths-Jones S."/>
            <person name="Doonan J.H."/>
            <person name="Yu J."/>
            <person name="Vienken K."/>
            <person name="Pain A."/>
            <person name="Freitag M."/>
            <person name="Selker E.U."/>
            <person name="Archer D.B."/>
            <person name="Penalva M.A."/>
            <person name="Oakley B.R."/>
            <person name="Momany M."/>
            <person name="Tanaka T."/>
            <person name="Kumagai T."/>
            <person name="Asai K."/>
            <person name="Machida M."/>
            <person name="Nierman W.C."/>
            <person name="Denning D.W."/>
            <person name="Caddick M.X."/>
            <person name="Hynes M."/>
            <person name="Paoletti M."/>
            <person name="Fischer R."/>
            <person name="Miller B.L."/>
            <person name="Dyer P.S."/>
            <person name="Sachs M.S."/>
            <person name="Osmani S.A."/>
            <person name="Birren B.W."/>
        </authorList>
    </citation>
    <scope>NUCLEOTIDE SEQUENCE [LARGE SCALE GENOMIC DNA]</scope>
    <source>
        <strain>FGSC A4 / ATCC 38163 / CBS 112.46 / NRRL 194 / M139</strain>
    </source>
</reference>
<reference key="3">
    <citation type="journal article" date="2009" name="Fungal Genet. Biol.">
        <title>The 2008 update of the Aspergillus nidulans genome annotation: a community effort.</title>
        <authorList>
            <person name="Wortman J.R."/>
            <person name="Gilsenan J.M."/>
            <person name="Joardar V."/>
            <person name="Deegan J."/>
            <person name="Clutterbuck J."/>
            <person name="Andersen M.R."/>
            <person name="Archer D."/>
            <person name="Bencina M."/>
            <person name="Braus G."/>
            <person name="Coutinho P."/>
            <person name="von Dohren H."/>
            <person name="Doonan J."/>
            <person name="Driessen A.J."/>
            <person name="Durek P."/>
            <person name="Espeso E."/>
            <person name="Fekete E."/>
            <person name="Flipphi M."/>
            <person name="Estrada C.G."/>
            <person name="Geysens S."/>
            <person name="Goldman G."/>
            <person name="de Groot P.W."/>
            <person name="Hansen K."/>
            <person name="Harris S.D."/>
            <person name="Heinekamp T."/>
            <person name="Helmstaedt K."/>
            <person name="Henrissat B."/>
            <person name="Hofmann G."/>
            <person name="Homan T."/>
            <person name="Horio T."/>
            <person name="Horiuchi H."/>
            <person name="James S."/>
            <person name="Jones M."/>
            <person name="Karaffa L."/>
            <person name="Karanyi Z."/>
            <person name="Kato M."/>
            <person name="Keller N."/>
            <person name="Kelly D.E."/>
            <person name="Kiel J.A."/>
            <person name="Kim J.M."/>
            <person name="van der Klei I.J."/>
            <person name="Klis F.M."/>
            <person name="Kovalchuk A."/>
            <person name="Krasevec N."/>
            <person name="Kubicek C.P."/>
            <person name="Liu B."/>
            <person name="Maccabe A."/>
            <person name="Meyer V."/>
            <person name="Mirabito P."/>
            <person name="Miskei M."/>
            <person name="Mos M."/>
            <person name="Mullins J."/>
            <person name="Nelson D.R."/>
            <person name="Nielsen J."/>
            <person name="Oakley B.R."/>
            <person name="Osmani S.A."/>
            <person name="Pakula T."/>
            <person name="Paszewski A."/>
            <person name="Paulsen I."/>
            <person name="Pilsyk S."/>
            <person name="Pocsi I."/>
            <person name="Punt P.J."/>
            <person name="Ram A.F."/>
            <person name="Ren Q."/>
            <person name="Robellet X."/>
            <person name="Robson G."/>
            <person name="Seiboth B."/>
            <person name="van Solingen P."/>
            <person name="Specht T."/>
            <person name="Sun J."/>
            <person name="Taheri-Talesh N."/>
            <person name="Takeshita N."/>
            <person name="Ussery D."/>
            <person name="vanKuyk P.A."/>
            <person name="Visser H."/>
            <person name="van de Vondervoort P.J."/>
            <person name="de Vries R.P."/>
            <person name="Walton J."/>
            <person name="Xiang X."/>
            <person name="Xiong Y."/>
            <person name="Zeng A.P."/>
            <person name="Brandt B.W."/>
            <person name="Cornell M.J."/>
            <person name="van den Hondel C.A."/>
            <person name="Visser J."/>
            <person name="Oliver S.G."/>
            <person name="Turner G."/>
        </authorList>
    </citation>
    <scope>GENOME REANNOTATION</scope>
    <source>
        <strain>FGSC A4 / ATCC 38163 / CBS 112.46 / NRRL 194 / M139</strain>
    </source>
</reference>
<reference key="4">
    <citation type="journal article" date="1994" name="Appl. Environ. Microbiol.">
        <title>Aspergillus nidulans verA is required for production of the mycotoxin sterigmatocystin.</title>
        <authorList>
            <person name="Keller N.P."/>
            <person name="Kantz N.J."/>
            <person name="Adams T.H."/>
        </authorList>
    </citation>
    <scope>FUNCTION</scope>
    <scope>INDUCTION</scope>
</reference>
<reference key="5">
    <citation type="journal article" date="1995" name="Appl. Environ. Microbiol.">
        <title>StcS, a putative P-450 monooxygenase, is required for the conversion of versicolorin A to sterigmatocystin in Aspergillus nidulans.</title>
        <authorList>
            <person name="Keller N.P."/>
            <person name="Segner S."/>
            <person name="Bhatnagar D."/>
            <person name="Adams T.H."/>
        </authorList>
    </citation>
    <scope>FUNCTION</scope>
</reference>
<reference key="6">
    <citation type="journal article" date="1995" name="J. Bacteriol.">
        <title>Sterigmatocystin biosynthesis in Aspergillus nidulans requires a novel type I polyketide synthase.</title>
        <authorList>
            <person name="Yu J.-H."/>
            <person name="Leonard T.J."/>
        </authorList>
    </citation>
    <scope>FUNCTION</scope>
    <source>
        <strain>FGSC A4 / ATCC 38163 / CBS 112.46 / NRRL 194 / M139</strain>
    </source>
</reference>
<reference key="7">
    <citation type="journal article" date="1996" name="Appl. Environ. Microbiol.">
        <title>Aspergillus nidulans stcP encodes an O-methyltransferase that is required for sterigmatocystin biosynthesis.</title>
        <authorList>
            <person name="Kelkar H.S."/>
            <person name="Keller N.P."/>
            <person name="Adams T.H."/>
        </authorList>
    </citation>
    <scope>FUNCTION</scope>
</reference>
<reference key="8">
    <citation type="journal article" date="1996" name="Proc. Natl. Acad. Sci. U.S.A.">
        <title>Aspergillus has distinct fatty acid synthases for primary and secondary metabolism.</title>
        <authorList>
            <person name="Brown D.W."/>
            <person name="Adams T.H."/>
            <person name="Keller N.P."/>
        </authorList>
    </citation>
    <scope>FUNCTION</scope>
    <scope>DISRUPTION PHENOTYPE</scope>
    <scope>PATHWAY</scope>
</reference>
<reference key="9">
    <citation type="journal article" date="1997" name="J. Biol. Chem.">
        <title>Aspergillus nidulans stcL encodes a putative cytochrome P-450 monooxygenase required for bisfuran desaturation during aflatoxin/sterigmatocystin biosynthesis.</title>
        <authorList>
            <person name="Kelkar H.S."/>
            <person name="Skloss T.W."/>
            <person name="Haw J.F."/>
            <person name="Keller N.P."/>
            <person name="Adams T.H."/>
        </authorList>
    </citation>
    <scope>FUNCTION</scope>
</reference>
<reference key="10">
    <citation type="journal article" date="1998" name="Mol. Microbiol.">
        <title>Sequence-specific binding by Aspergillus nidulans aflR, a C6 zinc cluster protein regulating mycotoxin biosynthesis.</title>
        <authorList>
            <person name="Fernandes M."/>
            <person name="Keller N.P."/>
            <person name="Adams T.H."/>
        </authorList>
    </citation>
    <scope>INDUCTION</scope>
</reference>
<reference key="11">
    <citation type="journal article" date="2000" name="Appl. Environ. Microbiol.">
        <title>Requirement of monooxygenase-mediated steps for sterigmatocystin biosynthesis by Aspergillus nidulans.</title>
        <authorList>
            <person name="Keller N.P."/>
            <person name="Watanabe C.M."/>
            <person name="Kelkar H.S."/>
            <person name="Adams T.H."/>
            <person name="Townsend C.A."/>
        </authorList>
    </citation>
    <scope>FUNCTION</scope>
</reference>
<reference key="12">
    <citation type="journal article" date="2012" name="Metabolites">
        <title>Genetics of polyketide metabolism in Aspergillus nidulans.</title>
        <authorList>
            <person name="Klejnstrup M.L."/>
            <person name="Frandsen R.J."/>
            <person name="Holm D.K."/>
            <person name="Nielsen M.T."/>
            <person name="Mortensen U.H."/>
            <person name="Larsen T.O."/>
            <person name="Nielsen J.B."/>
        </authorList>
    </citation>
    <scope>REVIEW ON STERIGMATOCYSTIN BIOSYNTHESIS</scope>
</reference>
<proteinExistence type="evidence at transcript level"/>
<name>STCJ_EMENI</name>
<gene>
    <name evidence="17" type="primary">stcJ</name>
    <name type="ORF">AN7815</name>
</gene>
<feature type="chain" id="PRO_0000180289" description="Fatty acid synthase alpha subunit stcJ">
    <location>
        <begin position="1"/>
        <end position="1559"/>
    </location>
</feature>
<feature type="domain" description="Carrier" evidence="5">
    <location>
        <begin position="68"/>
        <end position="147"/>
    </location>
</feature>
<feature type="domain" description="Ketosynthase family 3 (KS3)" evidence="6">
    <location>
        <begin position="873"/>
        <end position="1327"/>
    </location>
</feature>
<feature type="region of interest" description="Ketoreductase (KR) domain" evidence="3 4">
    <location>
        <begin position="457"/>
        <end position="693"/>
    </location>
</feature>
<feature type="region of interest" description="Disordered" evidence="7">
    <location>
        <begin position="1105"/>
        <end position="1125"/>
    </location>
</feature>
<feature type="compositionally biased region" description="Basic and acidic residues" evidence="7">
    <location>
        <begin position="1105"/>
        <end position="1117"/>
    </location>
</feature>
<feature type="active site" description="For beta-ketoacyl synthase activity" evidence="6">
    <location>
        <position position="1058"/>
    </location>
</feature>
<feature type="active site" description="For beta-ketoacyl synthase activity" evidence="6">
    <location>
        <position position="1212"/>
    </location>
</feature>
<feature type="active site" description="For beta-ketoacyl synthase activity" evidence="6">
    <location>
        <position position="1253"/>
    </location>
</feature>
<feature type="binding site" evidence="1">
    <location>
        <begin position="1432"/>
        <end position="1434"/>
    </location>
    <ligand>
        <name>acetyl-CoA</name>
        <dbReference type="ChEBI" id="CHEBI:57288"/>
    </ligand>
</feature>
<feature type="binding site" evidence="1">
    <location>
        <position position="1432"/>
    </location>
    <ligand>
        <name>Mg(2+)</name>
        <dbReference type="ChEBI" id="CHEBI:18420"/>
    </ligand>
</feature>
<feature type="binding site" evidence="1">
    <location>
        <begin position="1480"/>
        <end position="1490"/>
    </location>
    <ligand>
        <name>acetyl-CoA</name>
        <dbReference type="ChEBI" id="CHEBI:57288"/>
    </ligand>
</feature>
<feature type="binding site" evidence="1">
    <location>
        <begin position="1504"/>
        <end position="1506"/>
    </location>
    <ligand>
        <name>acetyl-CoA</name>
        <dbReference type="ChEBI" id="CHEBI:57288"/>
    </ligand>
</feature>
<feature type="binding site" evidence="1">
    <location>
        <begin position="1532"/>
        <end position="1534"/>
    </location>
    <ligand>
        <name>acetyl-CoA</name>
        <dbReference type="ChEBI" id="CHEBI:57288"/>
    </ligand>
</feature>
<feature type="binding site" evidence="1">
    <location>
        <position position="1533"/>
    </location>
    <ligand>
        <name>Mg(2+)</name>
        <dbReference type="ChEBI" id="CHEBI:18420"/>
    </ligand>
</feature>
<feature type="modified residue" description="O-(pantetheine 4'-phosphoryl)serine" evidence="5">
    <location>
        <position position="106"/>
    </location>
</feature>
<feature type="sequence conflict" description="In Ref. 1; AAC49198." evidence="18" ref="1">
    <original>T</original>
    <variation>N</variation>
    <location>
        <position position="215"/>
    </location>
</feature>
<feature type="sequence conflict" description="In Ref. 1; AAC49198." evidence="18" ref="1">
    <original>A</original>
    <variation>P</variation>
    <location>
        <position position="456"/>
    </location>
</feature>
<feature type="sequence conflict" description="In Ref. 1; AAC49198." evidence="18" ref="1">
    <original>I</original>
    <variation>S</variation>
    <location>
        <position position="1192"/>
    </location>
</feature>
<keyword id="KW-0275">Fatty acid biosynthesis</keyword>
<keyword id="KW-0276">Fatty acid metabolism</keyword>
<keyword id="KW-0444">Lipid biosynthesis</keyword>
<keyword id="KW-0443">Lipid metabolism</keyword>
<keyword id="KW-0460">Magnesium</keyword>
<keyword id="KW-0479">Metal-binding</keyword>
<keyword id="KW-0511">Multifunctional enzyme</keyword>
<keyword id="KW-0521">NADP</keyword>
<keyword id="KW-0560">Oxidoreductase</keyword>
<keyword id="KW-0596">Phosphopantetheine</keyword>
<keyword id="KW-0597">Phosphoprotein</keyword>
<keyword id="KW-1185">Reference proteome</keyword>
<keyword id="KW-0808">Transferase</keyword>
<keyword id="KW-0843">Virulence</keyword>
<protein>
    <recommendedName>
        <fullName evidence="17">Fatty acid synthase alpha subunit stcJ</fullName>
        <ecNumber evidence="3">2.3.1.86</ecNumber>
    </recommendedName>
    <domain>
        <recommendedName>
            <fullName evidence="3">3-oxoacyl-[acyl-carrier-protein] reductase</fullName>
            <ecNumber evidence="3">1.1.1.100</ecNumber>
        </recommendedName>
        <alternativeName>
            <fullName evidence="3">3-oxoacyl-[acyl-carrier-protein] synthase</fullName>
            <ecNumber evidence="3">2.3.1.41</ecNumber>
        </alternativeName>
        <alternativeName>
            <fullName evidence="17">Sterigmatocystin biosynthesis cluster protein J</fullName>
        </alternativeName>
    </domain>
</protein>
<evidence type="ECO:0000250" key="1">
    <source>
        <dbReference type="UniProtKB" id="P19097"/>
    </source>
</evidence>
<evidence type="ECO:0000250" key="2">
    <source>
        <dbReference type="UniProtKB" id="Q12053"/>
    </source>
</evidence>
<evidence type="ECO:0000250" key="3">
    <source>
        <dbReference type="UniProtKB" id="Q8TGA2"/>
    </source>
</evidence>
<evidence type="ECO:0000255" key="4"/>
<evidence type="ECO:0000255" key="5">
    <source>
        <dbReference type="PROSITE-ProRule" id="PRU00258"/>
    </source>
</evidence>
<evidence type="ECO:0000255" key="6">
    <source>
        <dbReference type="PROSITE-ProRule" id="PRU01348"/>
    </source>
</evidence>
<evidence type="ECO:0000256" key="7">
    <source>
        <dbReference type="SAM" id="MobiDB-lite"/>
    </source>
</evidence>
<evidence type="ECO:0000269" key="8">
    <source>
    </source>
</evidence>
<evidence type="ECO:0000269" key="9">
    <source>
    </source>
</evidence>
<evidence type="ECO:0000269" key="10">
    <source>
    </source>
</evidence>
<evidence type="ECO:0000269" key="11">
    <source>
    </source>
</evidence>
<evidence type="ECO:0000269" key="12">
    <source>
    </source>
</evidence>
<evidence type="ECO:0000269" key="13">
    <source>
    </source>
</evidence>
<evidence type="ECO:0000269" key="14">
    <source>
    </source>
</evidence>
<evidence type="ECO:0000269" key="15">
    <source>
    </source>
</evidence>
<evidence type="ECO:0000303" key="16">
    <source>
    </source>
</evidence>
<evidence type="ECO:0000303" key="17">
    <source>
    </source>
</evidence>
<evidence type="ECO:0000305" key="18"/>
<evidence type="ECO:0000305" key="19">
    <source>
    </source>
</evidence>
<dbReference type="EC" id="2.3.1.86" evidence="3"/>
<dbReference type="EC" id="1.1.1.100" evidence="3"/>
<dbReference type="EC" id="2.3.1.41" evidence="3"/>
<dbReference type="EMBL" id="U34740">
    <property type="protein sequence ID" value="AAC49198.1"/>
    <property type="molecule type" value="Genomic_DNA"/>
</dbReference>
<dbReference type="EMBL" id="AACD01000132">
    <property type="protein sequence ID" value="EAA61603.1"/>
    <property type="molecule type" value="Genomic_DNA"/>
</dbReference>
<dbReference type="EMBL" id="BN001304">
    <property type="protein sequence ID" value="CBF80164.1"/>
    <property type="molecule type" value="Genomic_DNA"/>
</dbReference>
<dbReference type="RefSeq" id="XP_681084.1">
    <property type="nucleotide sequence ID" value="XM_675992.1"/>
</dbReference>
<dbReference type="SMR" id="Q00681"/>
<dbReference type="STRING" id="227321.Q00681"/>
<dbReference type="EnsemblFungi" id="CBF80164">
    <property type="protein sequence ID" value="CBF80164"/>
    <property type="gene ID" value="ANIA_07815"/>
</dbReference>
<dbReference type="KEGG" id="ani:ANIA_07815"/>
<dbReference type="eggNOG" id="ENOG502SH82">
    <property type="taxonomic scope" value="Eukaryota"/>
</dbReference>
<dbReference type="HOGENOM" id="CLU_000114_0_0_1"/>
<dbReference type="InParanoid" id="Q00681"/>
<dbReference type="OMA" id="VGVAPKY"/>
<dbReference type="OrthoDB" id="4251012at2759"/>
<dbReference type="UniPathway" id="UPA00377"/>
<dbReference type="Proteomes" id="UP000000560">
    <property type="component" value="Chromosome IV"/>
</dbReference>
<dbReference type="GO" id="GO:0005835">
    <property type="term" value="C:fatty acid synthase complex"/>
    <property type="evidence" value="ECO:0007669"/>
    <property type="project" value="InterPro"/>
</dbReference>
<dbReference type="GO" id="GO:0004316">
    <property type="term" value="F:3-oxoacyl-[acyl-carrier-protein] reductase (NADPH) activity"/>
    <property type="evidence" value="ECO:0007669"/>
    <property type="project" value="InterPro"/>
</dbReference>
<dbReference type="GO" id="GO:0004315">
    <property type="term" value="F:3-oxoacyl-[acyl-carrier-protein] synthase activity"/>
    <property type="evidence" value="ECO:0007669"/>
    <property type="project" value="InterPro"/>
</dbReference>
<dbReference type="GO" id="GO:0004312">
    <property type="term" value="F:fatty acid synthase activity"/>
    <property type="evidence" value="ECO:0007669"/>
    <property type="project" value="InterPro"/>
</dbReference>
<dbReference type="GO" id="GO:0008897">
    <property type="term" value="F:holo-[acyl-carrier-protein] synthase activity"/>
    <property type="evidence" value="ECO:0007669"/>
    <property type="project" value="InterPro"/>
</dbReference>
<dbReference type="GO" id="GO:0000287">
    <property type="term" value="F:magnesium ion binding"/>
    <property type="evidence" value="ECO:0007669"/>
    <property type="project" value="InterPro"/>
</dbReference>
<dbReference type="GO" id="GO:0042759">
    <property type="term" value="P:long-chain fatty acid biosynthetic process"/>
    <property type="evidence" value="ECO:0007669"/>
    <property type="project" value="InterPro"/>
</dbReference>
<dbReference type="GO" id="GO:0045461">
    <property type="term" value="P:sterigmatocystin biosynthetic process"/>
    <property type="evidence" value="ECO:0000315"/>
    <property type="project" value="GO_Central"/>
</dbReference>
<dbReference type="CDD" id="cd00828">
    <property type="entry name" value="elong_cond_enzymes"/>
    <property type="match status" value="1"/>
</dbReference>
<dbReference type="CDD" id="cd08950">
    <property type="entry name" value="KR_fFAS_SDR_c_like"/>
    <property type="match status" value="1"/>
</dbReference>
<dbReference type="Gene3D" id="3.30.70.2490">
    <property type="match status" value="1"/>
</dbReference>
<dbReference type="Gene3D" id="3.40.47.10">
    <property type="match status" value="1"/>
</dbReference>
<dbReference type="Gene3D" id="3.90.470.20">
    <property type="entry name" value="4'-phosphopantetheinyl transferase domain"/>
    <property type="match status" value="1"/>
</dbReference>
<dbReference type="Gene3D" id="3.40.50.720">
    <property type="entry name" value="NAD(P)-binding Rossmann-like Domain"/>
    <property type="match status" value="1"/>
</dbReference>
<dbReference type="InterPro" id="IPR008278">
    <property type="entry name" value="4-PPantetheinyl_Trfase_dom"/>
</dbReference>
<dbReference type="InterPro" id="IPR037143">
    <property type="entry name" value="4-PPantetheinyl_Trfase_dom_sf"/>
</dbReference>
<dbReference type="InterPro" id="IPR040899">
    <property type="entry name" value="Fas_alpha_ACP"/>
</dbReference>
<dbReference type="InterPro" id="IPR047224">
    <property type="entry name" value="FAS_alpha_su_C"/>
</dbReference>
<dbReference type="InterPro" id="IPR026025">
    <property type="entry name" value="FAS_alpha_yeast"/>
</dbReference>
<dbReference type="InterPro" id="IPR041550">
    <property type="entry name" value="FASI_helical"/>
</dbReference>
<dbReference type="InterPro" id="IPR050830">
    <property type="entry name" value="Fungal_FAS"/>
</dbReference>
<dbReference type="InterPro" id="IPR018201">
    <property type="entry name" value="Ketoacyl_synth_AS"/>
</dbReference>
<dbReference type="InterPro" id="IPR014031">
    <property type="entry name" value="Ketoacyl_synth_C"/>
</dbReference>
<dbReference type="InterPro" id="IPR014030">
    <property type="entry name" value="Ketoacyl_synth_N"/>
</dbReference>
<dbReference type="InterPro" id="IPR036291">
    <property type="entry name" value="NAD(P)-bd_dom_sf"/>
</dbReference>
<dbReference type="InterPro" id="IPR020841">
    <property type="entry name" value="PKS_Beta-ketoAc_synthase_dom"/>
</dbReference>
<dbReference type="InterPro" id="IPR009081">
    <property type="entry name" value="PP-bd_ACP"/>
</dbReference>
<dbReference type="InterPro" id="IPR004568">
    <property type="entry name" value="Ppantetheine-prot_Trfase_dom"/>
</dbReference>
<dbReference type="InterPro" id="IPR002347">
    <property type="entry name" value="SDR_fam"/>
</dbReference>
<dbReference type="InterPro" id="IPR016039">
    <property type="entry name" value="Thiolase-like"/>
</dbReference>
<dbReference type="NCBIfam" id="TIGR00556">
    <property type="entry name" value="pantethn_trn"/>
    <property type="match status" value="1"/>
</dbReference>
<dbReference type="PANTHER" id="PTHR10982:SF21">
    <property type="entry name" value="FATTY ACID SYNTHASE SUBUNIT BETA"/>
    <property type="match status" value="1"/>
</dbReference>
<dbReference type="PANTHER" id="PTHR10982">
    <property type="entry name" value="MALONYL COA-ACYL CARRIER PROTEIN TRANSACYLASE"/>
    <property type="match status" value="1"/>
</dbReference>
<dbReference type="Pfam" id="PF01648">
    <property type="entry name" value="ACPS"/>
    <property type="match status" value="1"/>
</dbReference>
<dbReference type="Pfam" id="PF00106">
    <property type="entry name" value="adh_short"/>
    <property type="match status" value="1"/>
</dbReference>
<dbReference type="Pfam" id="PF18325">
    <property type="entry name" value="Fas_alpha_ACP"/>
    <property type="match status" value="1"/>
</dbReference>
<dbReference type="Pfam" id="PF18314">
    <property type="entry name" value="FAS_I_H"/>
    <property type="match status" value="1"/>
</dbReference>
<dbReference type="Pfam" id="PF00109">
    <property type="entry name" value="ketoacyl-synt"/>
    <property type="match status" value="1"/>
</dbReference>
<dbReference type="Pfam" id="PF02801">
    <property type="entry name" value="Ketoacyl-synt_C"/>
    <property type="match status" value="1"/>
</dbReference>
<dbReference type="PIRSF" id="PIRSF000454">
    <property type="entry name" value="FAS_yeast_alpha"/>
    <property type="match status" value="1"/>
</dbReference>
<dbReference type="SMART" id="SM00825">
    <property type="entry name" value="PKS_KS"/>
    <property type="match status" value="1"/>
</dbReference>
<dbReference type="SUPFAM" id="SSF56214">
    <property type="entry name" value="4'-phosphopantetheinyl transferase"/>
    <property type="match status" value="1"/>
</dbReference>
<dbReference type="SUPFAM" id="SSF51735">
    <property type="entry name" value="NAD(P)-binding Rossmann-fold domains"/>
    <property type="match status" value="1"/>
</dbReference>
<dbReference type="SUPFAM" id="SSF53901">
    <property type="entry name" value="Thiolase-like"/>
    <property type="match status" value="2"/>
</dbReference>
<dbReference type="PROSITE" id="PS50075">
    <property type="entry name" value="CARRIER"/>
    <property type="match status" value="1"/>
</dbReference>
<dbReference type="PROSITE" id="PS00606">
    <property type="entry name" value="KS3_1"/>
    <property type="match status" value="1"/>
</dbReference>
<dbReference type="PROSITE" id="PS52004">
    <property type="entry name" value="KS3_2"/>
    <property type="match status" value="1"/>
</dbReference>
<dbReference type="PROSITE" id="PS00012">
    <property type="entry name" value="PHOSPHOPANTETHEINE"/>
    <property type="match status" value="1"/>
</dbReference>
<comment type="function">
    <text evidence="2 8 9 11 12 13 14 16 19">Fatty acid synthase alpha subunit; part of the gene cluster that mediates the biosynthesis of sterigmatocystin (ST), a polyketide-derived furanocoumarin which is part of the most toxic and carcinogenic compounds among the known mycotoxins (PubMed:8643646, PubMed:8962148). The first step in the biosynthesis of sterigmatocystin is the production of hexanoate by the fatty acid synthase (FAS) units stcJ and stcK (PubMed:8962148). The polyketide backbone is assembled by the non-reducing polyketide synthase stcA by condensation of the starter hexanoyl-CoA and 7 malonyl-CoA extender units followed by cyclization and release of norsolorinic acid (By similarity). Norsolorinic acid is the first stable intermediate in the biosynthesis of sterigmatocystin and is converted into averantin (AVN) by the ketoreductase stcE which reduces the hexanoate ketone to an alcohol (Probable) (PubMed:8643646). Averantin is then oxidized into 5'-hydroxyaverantin (HAVN) by the cytochrome P450 monooxygenase stcF (PubMed:10618248). 5'-hydroxyaverantin is further converted to 5'-oxyaverantin (OAVN) by the 5'-hydroxyaverantin dehydrogenase stcG (PubMed:24957370). The next step is the conversion of OAVN into averufin (AVF) which is catalyzed by a yet to be identified enzyme (PubMed:24957370). The cytochrome P450 monooxygenase stcB and the flavin-binding monooxygenase stcW are both required for the conversion of averufin to 1-hydroxyversicolorone (PubMed:10618248). The esterase stcI probably catalyzes the formation of versiconal hemiacetal acetate from 1-hydroxyversicolorone (PubMed:24957370). The oxydoreductase stcN then probably catalyzes the biosynthetic step from versiconal to versicolorin B (VERB) (PubMed:24957370). The next step is performed by the versicolorin B desaturase stcL to produce versicolorin A (VERA) (PubMed:8999832). The ketoreductase stcU and the cytochrome P450 monooxygenase stcS are involved in the conversion of versicolorin A to demethylsterigmatocystin (PubMed:7486998). The Baeyer-Villiger oxidas stcQ and the reductase stcR might be involved in the biosynthetic step from versicolorin A to demethylsterigmatocystin (PubMed:24957370). The final step in the biosynthesis of sterigmatocystin is the methylation of demethylsterigmatocystin catalyzed by the methyltransferase stcP (PubMed:8900026).</text>
</comment>
<comment type="catalytic activity">
    <reaction evidence="3">
        <text>acetyl-CoA + n malonyl-CoA + 2n NADPH + 4n H(+) = a long-chain-acyl-CoA + n CoA + n CO2 + 2n NADP(+).</text>
        <dbReference type="EC" id="2.3.1.86"/>
    </reaction>
</comment>
<comment type="catalytic activity">
    <reaction evidence="3">
        <text>a fatty acyl-[ACP] + malonyl-[ACP] + H(+) = a 3-oxoacyl-[ACP] + holo-[ACP] + CO2</text>
        <dbReference type="Rhea" id="RHEA:22836"/>
        <dbReference type="Rhea" id="RHEA-COMP:9623"/>
        <dbReference type="Rhea" id="RHEA-COMP:9685"/>
        <dbReference type="Rhea" id="RHEA-COMP:9916"/>
        <dbReference type="Rhea" id="RHEA-COMP:14125"/>
        <dbReference type="ChEBI" id="CHEBI:15378"/>
        <dbReference type="ChEBI" id="CHEBI:16526"/>
        <dbReference type="ChEBI" id="CHEBI:64479"/>
        <dbReference type="ChEBI" id="CHEBI:78449"/>
        <dbReference type="ChEBI" id="CHEBI:78776"/>
        <dbReference type="ChEBI" id="CHEBI:138651"/>
        <dbReference type="EC" id="2.3.1.41"/>
    </reaction>
</comment>
<comment type="catalytic activity">
    <reaction evidence="3">
        <text>a (3R)-hydroxyacyl-[ACP] + NADP(+) = a 3-oxoacyl-[ACP] + NADPH + H(+)</text>
        <dbReference type="Rhea" id="RHEA:17397"/>
        <dbReference type="Rhea" id="RHEA-COMP:9916"/>
        <dbReference type="Rhea" id="RHEA-COMP:9945"/>
        <dbReference type="ChEBI" id="CHEBI:15378"/>
        <dbReference type="ChEBI" id="CHEBI:57783"/>
        <dbReference type="ChEBI" id="CHEBI:58349"/>
        <dbReference type="ChEBI" id="CHEBI:78776"/>
        <dbReference type="ChEBI" id="CHEBI:78827"/>
        <dbReference type="EC" id="1.1.1.100"/>
    </reaction>
</comment>
<comment type="pathway">
    <text evidence="11 13">Mycotoxin biosynthesis; sterigmatocystin biosynthesis.</text>
</comment>
<comment type="subunit">
    <text evidence="1">[Alpha(6)beta(6)] hexamers of two multifunctional subunits (alpha and beta).</text>
</comment>
<comment type="induction">
    <text evidence="10 11 15">The genes forming the sterigmatocystin biosynthesis cluster are co-regulated and induced on oatmeal porridge or the fungal isolates were grown either on oatmeal porridge or in YEC medium (0.2% yeast extract, 5.0% corn steep liquor) (PubMed:8017929, PubMed:8643646). Expression is positively regulated by the cluster-specific transcription factor aflR that binds the palindromic sequence 5'-TCG(N5)CGA-3'found in the promoter (PubMed:9680223).</text>
</comment>
<comment type="disruption phenotype">
    <text evidence="13">Fails to produce sterigmatocystin under conditions that supports production by wild-type. Able to grow without exogenous long-chain fatty acids.</text>
</comment>
<comment type="similarity">
    <text evidence="18">Belongs to the thiolase-like superfamily. Fungal fatty acid synthetase subunit alpha family.</text>
</comment>
<accession>Q00681</accession>
<accession>C8VDT8</accession>
<accession>Q5AV65</accession>
<sequence>MTQKTIQQVPRQGLELLASTQDLAQLCYIYGEPAEGEDSTADESIINTPQCSTIPEVAVEPEVQPIPDTPLTAIFIIRALVARKLRRSETEIDPSRSIKELCGGKSTLQNELIGELGNEFQTSLPDRAEDVSLADLDAALGEVSLGPTSVSLLQRVFTAKMPARMTVSNVRERLAEIWGLGFHRQTAVLVAALAAEPHSRLTSLEAAYQYWDGLTEAYGQSLGLFLRKAISQQAARSDDQGAQAIAPADSLGSKDLARKQYEALREYLGIRTPTTKQDGLDLADLQQKLDCWTAEFSDDFLSQISRRFDARKTRWYRDWWNSARQELLTICQNSNVQWTDKMREHFVQRAEEGLVEIARAHSLAKPLVPDLIQAISLPPVVRLGRLATMMPRTVVTLKGEIQCEEHEREPSCFVEFFSSWIQANNIRCTIQSNGEDLTSVFINSLVHASQQGVSFANHTYLITGAGPGSIGQHIVRRLLTGGARVIVTTSREPLPAAAFFKELYSKCGNRGSQLHLVPFNQASVVDCERLIGYIYDDLGLDLDAILPFAATSQVGAEIDGLDASNEAAFRLMLVNVLRLVGFVVSQKRRRGISCRPTQVVLPLSPNHGILGGDGLYAESKRGLETLIQRFHSESWKEELSICGVSIGWTRSTGLMAANDLVAETAEKQGRVLTFSVDEMGDLISLLLTPQLATRCEDAPVMADFSGNLSCWRDASAQLAAARASLRERADTARALAQEDEREYRCRRAGSTQEPVDQRVSLHLGFPSLPEYDPLLHPDLVPADAVVVVGFAELGPWGSARIRWEMESRGCLSPAGYVETAWLMNLIRHVDNVNYVGWVDGEDGKPVADADIPKRYGERILSNAGIRSLPSDNREVFQEIVLEQDLPSFETTRENAEALQQRHGDMVQVSTLKNGLCLVQLQHGATIRVPKSIMSPPGVAGQLPTGWSPERYGIPAEIVQQVDPVALVLLCCVAEAFYSAGISDPMEIFEHIHLSELGNFVGSSMGGVVNTRALYHDVCLDKDVQSDALQETYLNTAPAWVNMLYLGAAGPIKTPVGACATALESVDSAVESIKAGQTKICLVGGYDDLQPEESAGFARMKATVSVRDEQARGREPGEMSRPTAASRSGFVESQGCGVQLLCRGDVALAMGLPIYGIIAGTGMASDGIGRSVPAPGQGILTFAQEDAQNPAPIRTALARWGLGIDDITVASLHATSTPANDTNEPLVIQREMTHLGRTSGRPLWAICQKFVTGHPKAPAAAWMLNGCLQVLDTGLVPGNRNADDVDPALRSFSHLCFPIRSIQTDGIKAFLLNSCGFGQKEAQLVGVHPRYFLGLLSEPEFEEYRTRRQLRIAGAERAYISAMMTNSIVCVQSHPPFGPAEMHSILLDPSARICLDSSTNSYRVTKASTPVYTGFQRPHDKREDPRPSTIGVDTVTLSSFNAHENAIFLQRNYTERERQSLQLQSHRSFRSAVASGWCAKEAVFKCLQTVSKGAGAAMSEIEIVRVQGAPSVLHGDALAAAQKAGLDNIQLSLSYGDDCVVAVALGVRKWCLWPLASIIR</sequence>
<organism>
    <name type="scientific">Emericella nidulans (strain FGSC A4 / ATCC 38163 / CBS 112.46 / NRRL 194 / M139)</name>
    <name type="common">Aspergillus nidulans</name>
    <dbReference type="NCBI Taxonomy" id="227321"/>
    <lineage>
        <taxon>Eukaryota</taxon>
        <taxon>Fungi</taxon>
        <taxon>Dikarya</taxon>
        <taxon>Ascomycota</taxon>
        <taxon>Pezizomycotina</taxon>
        <taxon>Eurotiomycetes</taxon>
        <taxon>Eurotiomycetidae</taxon>
        <taxon>Eurotiales</taxon>
        <taxon>Aspergillaceae</taxon>
        <taxon>Aspergillus</taxon>
        <taxon>Aspergillus subgen. Nidulantes</taxon>
    </lineage>
</organism>